<reference key="1">
    <citation type="journal article" date="2005" name="Nature">
        <title>Genome sequencing and analysis of Aspergillus oryzae.</title>
        <authorList>
            <person name="Machida M."/>
            <person name="Asai K."/>
            <person name="Sano M."/>
            <person name="Tanaka T."/>
            <person name="Kumagai T."/>
            <person name="Terai G."/>
            <person name="Kusumoto K."/>
            <person name="Arima T."/>
            <person name="Akita O."/>
            <person name="Kashiwagi Y."/>
            <person name="Abe K."/>
            <person name="Gomi K."/>
            <person name="Horiuchi H."/>
            <person name="Kitamoto K."/>
            <person name="Kobayashi T."/>
            <person name="Takeuchi M."/>
            <person name="Denning D.W."/>
            <person name="Galagan J.E."/>
            <person name="Nierman W.C."/>
            <person name="Yu J."/>
            <person name="Archer D.B."/>
            <person name="Bennett J.W."/>
            <person name="Bhatnagar D."/>
            <person name="Cleveland T.E."/>
            <person name="Fedorova N.D."/>
            <person name="Gotoh O."/>
            <person name="Horikawa H."/>
            <person name="Hosoyama A."/>
            <person name="Ichinomiya M."/>
            <person name="Igarashi R."/>
            <person name="Iwashita K."/>
            <person name="Juvvadi P.R."/>
            <person name="Kato M."/>
            <person name="Kato Y."/>
            <person name="Kin T."/>
            <person name="Kokubun A."/>
            <person name="Maeda H."/>
            <person name="Maeyama N."/>
            <person name="Maruyama J."/>
            <person name="Nagasaki H."/>
            <person name="Nakajima T."/>
            <person name="Oda K."/>
            <person name="Okada K."/>
            <person name="Paulsen I."/>
            <person name="Sakamoto K."/>
            <person name="Sawano T."/>
            <person name="Takahashi M."/>
            <person name="Takase K."/>
            <person name="Terabayashi Y."/>
            <person name="Wortman J.R."/>
            <person name="Yamada O."/>
            <person name="Yamagata Y."/>
            <person name="Anazawa H."/>
            <person name="Hata Y."/>
            <person name="Koide Y."/>
            <person name="Komori T."/>
            <person name="Koyama Y."/>
            <person name="Minetoki T."/>
            <person name="Suharnan S."/>
            <person name="Tanaka A."/>
            <person name="Isono K."/>
            <person name="Kuhara S."/>
            <person name="Ogasawara N."/>
            <person name="Kikuchi H."/>
        </authorList>
    </citation>
    <scope>NUCLEOTIDE SEQUENCE [LARGE SCALE GENOMIC DNA]</scope>
    <source>
        <strain>ATCC 42149 / RIB 40</strain>
    </source>
</reference>
<name>PTPA2_ASPOR</name>
<evidence type="ECO:0000250" key="1"/>
<evidence type="ECO:0000256" key="2">
    <source>
        <dbReference type="SAM" id="MobiDB-lite"/>
    </source>
</evidence>
<evidence type="ECO:0000305" key="3"/>
<dbReference type="EC" id="5.2.1.8"/>
<dbReference type="EMBL" id="BA000052">
    <property type="protein sequence ID" value="BAE60699.1"/>
    <property type="molecule type" value="Genomic_DNA"/>
</dbReference>
<dbReference type="RefSeq" id="XP_001727538.1">
    <property type="nucleotide sequence ID" value="XM_001727486.1"/>
</dbReference>
<dbReference type="SMR" id="Q2UCL6"/>
<dbReference type="STRING" id="510516.Q2UCL6"/>
<dbReference type="EnsemblFungi" id="BAE60699">
    <property type="protein sequence ID" value="BAE60699"/>
    <property type="gene ID" value="AO090012000537"/>
</dbReference>
<dbReference type="GeneID" id="5988012"/>
<dbReference type="KEGG" id="aor:AO090012000537"/>
<dbReference type="VEuPathDB" id="FungiDB:AO090012000537"/>
<dbReference type="HOGENOM" id="CLU_030733_0_0_1"/>
<dbReference type="OMA" id="SWIKINA"/>
<dbReference type="OrthoDB" id="66969at5052"/>
<dbReference type="Proteomes" id="UP000006564">
    <property type="component" value="Chromosome 4"/>
</dbReference>
<dbReference type="GO" id="GO:0005737">
    <property type="term" value="C:cytoplasm"/>
    <property type="evidence" value="ECO:0007669"/>
    <property type="project" value="UniProtKB-SubCell"/>
</dbReference>
<dbReference type="GO" id="GO:0005634">
    <property type="term" value="C:nucleus"/>
    <property type="evidence" value="ECO:0007669"/>
    <property type="project" value="TreeGrafter"/>
</dbReference>
<dbReference type="GO" id="GO:0000159">
    <property type="term" value="C:protein phosphatase type 2A complex"/>
    <property type="evidence" value="ECO:0007669"/>
    <property type="project" value="TreeGrafter"/>
</dbReference>
<dbReference type="GO" id="GO:0003755">
    <property type="term" value="F:peptidyl-prolyl cis-trans isomerase activity"/>
    <property type="evidence" value="ECO:0007669"/>
    <property type="project" value="UniProtKB-KW"/>
</dbReference>
<dbReference type="GO" id="GO:0008160">
    <property type="term" value="F:protein tyrosine phosphatase activator activity"/>
    <property type="evidence" value="ECO:0007669"/>
    <property type="project" value="TreeGrafter"/>
</dbReference>
<dbReference type="GO" id="GO:0007052">
    <property type="term" value="P:mitotic spindle organization"/>
    <property type="evidence" value="ECO:0007669"/>
    <property type="project" value="TreeGrafter"/>
</dbReference>
<dbReference type="CDD" id="cd04087">
    <property type="entry name" value="PTPA"/>
    <property type="match status" value="1"/>
</dbReference>
<dbReference type="FunFam" id="1.20.120.1150:FF:000002">
    <property type="entry name" value="Serine/threonine-protein phosphatase 2A activator"/>
    <property type="match status" value="1"/>
</dbReference>
<dbReference type="Gene3D" id="1.20.120.1150">
    <property type="match status" value="1"/>
</dbReference>
<dbReference type="InterPro" id="IPR004327">
    <property type="entry name" value="Phstyr_phstse_ac"/>
</dbReference>
<dbReference type="InterPro" id="IPR043170">
    <property type="entry name" value="PTPA_C_lid"/>
</dbReference>
<dbReference type="InterPro" id="IPR037218">
    <property type="entry name" value="PTPA_sf"/>
</dbReference>
<dbReference type="PANTHER" id="PTHR10012">
    <property type="entry name" value="SERINE/THREONINE-PROTEIN PHOSPHATASE 2A REGULATORY SUBUNIT B"/>
    <property type="match status" value="1"/>
</dbReference>
<dbReference type="PANTHER" id="PTHR10012:SF5">
    <property type="entry name" value="SERINE_THREONINE-PROTEIN PHOSPHATASE 2A ACTIVATOR 2"/>
    <property type="match status" value="1"/>
</dbReference>
<dbReference type="Pfam" id="PF03095">
    <property type="entry name" value="PTPA"/>
    <property type="match status" value="1"/>
</dbReference>
<dbReference type="PIRSF" id="PIRSF016325">
    <property type="entry name" value="Phstyr_phstse_ac"/>
    <property type="match status" value="1"/>
</dbReference>
<dbReference type="SUPFAM" id="SSF140984">
    <property type="entry name" value="PTPA-like"/>
    <property type="match status" value="1"/>
</dbReference>
<sequence>MASEVSASQGVPKPKIDLSKKLSELRSNRKSQPALPSRPSREPAPVTPPLSNPPDLSSHQYARPVCRILSNHDHQLFLSSSSYSLILAFIFGLSDSVRGRATTDSKDRPVSPNVSKILAVVESIRTLLDQHPSIDQGGSRFGNPAFRDLFDDVAAQSAKWHREILGIQDSTAIEEASAYLIHSLGSRDRLDYGSGHELNFMMWLLCLRQMQLYSTADFEMIVFRVYVTYMHLMRDVQSAYYLEPAGSHGVWGLDDYHFLPFLFGAAQLVEHPYITPLAIHNNVILDEEGDRYIYLDQVRWVDSVKTVKGLRWHSPMLDDISGAKNWSKIESGMKKMFVKEVLGKLPIMQHFLFGSLIPAAPGMGEADDVQTDGHDHTHSHDHAHAQHTDHFGDCCGIKVPSTVAAGAEARKRGTGLRPIPFD</sequence>
<proteinExistence type="inferred from homology"/>
<accession>Q2UCL6</accession>
<gene>
    <name type="primary">rrd2</name>
    <name type="ORF">AO090012000537</name>
</gene>
<comment type="function">
    <text evidence="1">PPIases accelerate the folding of proteins. It catalyzes the cis-trans isomerization of proline imidic peptide bonds in oligopeptides. Acts as a regulatory subunit for PP2A-like phosphatases modulating their activity or substrate specificity, probably by inducing a conformational change in the catalytic subunit, a direct target of the PPIase. Can reactivate inactive phosphatase PP2A-phosphatase methylesterase complexes (PP2Ai) in presence of ATP and Mg(2+) by dissociating the inactive form from the complex (By similarity).</text>
</comment>
<comment type="catalytic activity">
    <reaction>
        <text>[protein]-peptidylproline (omega=180) = [protein]-peptidylproline (omega=0)</text>
        <dbReference type="Rhea" id="RHEA:16237"/>
        <dbReference type="Rhea" id="RHEA-COMP:10747"/>
        <dbReference type="Rhea" id="RHEA-COMP:10748"/>
        <dbReference type="ChEBI" id="CHEBI:83833"/>
        <dbReference type="ChEBI" id="CHEBI:83834"/>
        <dbReference type="EC" id="5.2.1.8"/>
    </reaction>
</comment>
<comment type="subcellular location">
    <subcellularLocation>
        <location evidence="1">Cytoplasm</location>
    </subcellularLocation>
</comment>
<comment type="similarity">
    <text evidence="3">Belongs to the PTPA-type PPIase family.</text>
</comment>
<organism>
    <name type="scientific">Aspergillus oryzae (strain ATCC 42149 / RIB 40)</name>
    <name type="common">Yellow koji mold</name>
    <dbReference type="NCBI Taxonomy" id="510516"/>
    <lineage>
        <taxon>Eukaryota</taxon>
        <taxon>Fungi</taxon>
        <taxon>Dikarya</taxon>
        <taxon>Ascomycota</taxon>
        <taxon>Pezizomycotina</taxon>
        <taxon>Eurotiomycetes</taxon>
        <taxon>Eurotiomycetidae</taxon>
        <taxon>Eurotiales</taxon>
        <taxon>Aspergillaceae</taxon>
        <taxon>Aspergillus</taxon>
        <taxon>Aspergillus subgen. Circumdati</taxon>
    </lineage>
</organism>
<keyword id="KW-0963">Cytoplasm</keyword>
<keyword id="KW-0413">Isomerase</keyword>
<keyword id="KW-1185">Reference proteome</keyword>
<keyword id="KW-0697">Rotamase</keyword>
<feature type="chain" id="PRO_0000226108" description="Serine/threonine-protein phosphatase 2A activator 2">
    <location>
        <begin position="1"/>
        <end position="422"/>
    </location>
</feature>
<feature type="region of interest" description="Disordered" evidence="2">
    <location>
        <begin position="1"/>
        <end position="57"/>
    </location>
</feature>
<feature type="compositionally biased region" description="Basic and acidic residues" evidence="2">
    <location>
        <begin position="14"/>
        <end position="27"/>
    </location>
</feature>
<protein>
    <recommendedName>
        <fullName>Serine/threonine-protein phosphatase 2A activator 2</fullName>
        <ecNumber>5.2.1.8</ecNumber>
    </recommendedName>
    <alternativeName>
        <fullName>Peptidyl-prolyl cis-trans isomerase PTPA-2</fullName>
        <shortName>PPIase PTPA-2</shortName>
        <shortName>Rotamase PTPA-2</shortName>
    </alternativeName>
    <alternativeName>
        <fullName>Phosphotyrosyl phosphatase activator 2</fullName>
    </alternativeName>
</protein>